<feature type="chain" id="PRO_1000013232" description="UDP-3-O-acyl-N-acetylglucosamine deacetylase">
    <location>
        <begin position="1"/>
        <end position="306"/>
    </location>
</feature>
<feature type="active site" description="Proton donor" evidence="1">
    <location>
        <position position="265"/>
    </location>
</feature>
<feature type="binding site" evidence="1">
    <location>
        <position position="79"/>
    </location>
    <ligand>
        <name>Zn(2+)</name>
        <dbReference type="ChEBI" id="CHEBI:29105"/>
    </ligand>
</feature>
<feature type="binding site" evidence="1">
    <location>
        <position position="238"/>
    </location>
    <ligand>
        <name>Zn(2+)</name>
        <dbReference type="ChEBI" id="CHEBI:29105"/>
    </ligand>
</feature>
<feature type="binding site" evidence="1">
    <location>
        <position position="242"/>
    </location>
    <ligand>
        <name>Zn(2+)</name>
        <dbReference type="ChEBI" id="CHEBI:29105"/>
    </ligand>
</feature>
<reference key="1">
    <citation type="submission" date="2006-09" db="EMBL/GenBank/DDBJ databases">
        <title>Complete sequence of chromosome 1 of Shewanella sp. ANA-3.</title>
        <authorList>
            <person name="Copeland A."/>
            <person name="Lucas S."/>
            <person name="Lapidus A."/>
            <person name="Barry K."/>
            <person name="Detter J.C."/>
            <person name="Glavina del Rio T."/>
            <person name="Hammon N."/>
            <person name="Israni S."/>
            <person name="Dalin E."/>
            <person name="Tice H."/>
            <person name="Pitluck S."/>
            <person name="Chertkov O."/>
            <person name="Brettin T."/>
            <person name="Bruce D."/>
            <person name="Han C."/>
            <person name="Tapia R."/>
            <person name="Gilna P."/>
            <person name="Schmutz J."/>
            <person name="Larimer F."/>
            <person name="Land M."/>
            <person name="Hauser L."/>
            <person name="Kyrpides N."/>
            <person name="Kim E."/>
            <person name="Newman D."/>
            <person name="Salticov C."/>
            <person name="Konstantinidis K."/>
            <person name="Klappenback J."/>
            <person name="Tiedje J."/>
            <person name="Richardson P."/>
        </authorList>
    </citation>
    <scope>NUCLEOTIDE SEQUENCE [LARGE SCALE GENOMIC DNA]</scope>
    <source>
        <strain>ANA-3</strain>
    </source>
</reference>
<sequence>MIFQRTVQKMVKATGVGLHSGNKVTLSIMPAPVNTGIVLVRTDMNPAVAIPAKAEQVRETTMCTALVNDEGIRISTIEHLFAALAGLGIDNAVIEVDAPEIPIMDGSASPFVFLLQSAGIKEQAAPKKYLKIKRPVRVEDGDKWAELKPFKGFRVNFKIDFAHPEIARSQQHVVMDFSTSAFVKDISRARTFGFMRDIEYLRANNLALGGSMENAVVLDEYRVLNPDGLRYEDEFVKHKILDAFGDLYVAGHAILGEFTAYKTGHALNNQLVRALLAQQDAWELVSFEKEADVPVSFTVPGGAVYA</sequence>
<dbReference type="EC" id="3.5.1.108" evidence="1"/>
<dbReference type="EMBL" id="CP000469">
    <property type="protein sequence ID" value="ABK49956.1"/>
    <property type="molecule type" value="Genomic_DNA"/>
</dbReference>
<dbReference type="RefSeq" id="WP_011624293.1">
    <property type="nucleotide sequence ID" value="NC_008577.1"/>
</dbReference>
<dbReference type="SMR" id="A0L1N7"/>
<dbReference type="STRING" id="94122.Shewana3_3738"/>
<dbReference type="GeneID" id="94729669"/>
<dbReference type="KEGG" id="shn:Shewana3_3738"/>
<dbReference type="eggNOG" id="COG0774">
    <property type="taxonomic scope" value="Bacteria"/>
</dbReference>
<dbReference type="HOGENOM" id="CLU_046528_1_0_6"/>
<dbReference type="OrthoDB" id="9802746at2"/>
<dbReference type="UniPathway" id="UPA00359">
    <property type="reaction ID" value="UER00478"/>
</dbReference>
<dbReference type="Proteomes" id="UP000002589">
    <property type="component" value="Chromosome"/>
</dbReference>
<dbReference type="GO" id="GO:0016020">
    <property type="term" value="C:membrane"/>
    <property type="evidence" value="ECO:0007669"/>
    <property type="project" value="GOC"/>
</dbReference>
<dbReference type="GO" id="GO:0046872">
    <property type="term" value="F:metal ion binding"/>
    <property type="evidence" value="ECO:0007669"/>
    <property type="project" value="UniProtKB-KW"/>
</dbReference>
<dbReference type="GO" id="GO:0103117">
    <property type="term" value="F:UDP-3-O-acyl-N-acetylglucosamine deacetylase activity"/>
    <property type="evidence" value="ECO:0007669"/>
    <property type="project" value="UniProtKB-UniRule"/>
</dbReference>
<dbReference type="GO" id="GO:0009245">
    <property type="term" value="P:lipid A biosynthetic process"/>
    <property type="evidence" value="ECO:0007669"/>
    <property type="project" value="UniProtKB-UniRule"/>
</dbReference>
<dbReference type="Gene3D" id="3.30.230.20">
    <property type="entry name" value="lpxc deacetylase, domain 1"/>
    <property type="match status" value="1"/>
</dbReference>
<dbReference type="Gene3D" id="3.30.1700.10">
    <property type="entry name" value="lpxc deacetylase, domain 2"/>
    <property type="match status" value="1"/>
</dbReference>
<dbReference type="HAMAP" id="MF_00388">
    <property type="entry name" value="LpxC"/>
    <property type="match status" value="1"/>
</dbReference>
<dbReference type="InterPro" id="IPR020568">
    <property type="entry name" value="Ribosomal_Su5_D2-typ_SF"/>
</dbReference>
<dbReference type="InterPro" id="IPR004463">
    <property type="entry name" value="UDP-acyl_GlcNac_deAcase"/>
</dbReference>
<dbReference type="InterPro" id="IPR011334">
    <property type="entry name" value="UDP-acyl_GlcNac_deAcase_C"/>
</dbReference>
<dbReference type="InterPro" id="IPR015870">
    <property type="entry name" value="UDP-acyl_N-AcGlcN_deAcase_N"/>
</dbReference>
<dbReference type="NCBIfam" id="TIGR00325">
    <property type="entry name" value="lpxC"/>
    <property type="match status" value="1"/>
</dbReference>
<dbReference type="PANTHER" id="PTHR33694">
    <property type="entry name" value="UDP-3-O-ACYL-N-ACETYLGLUCOSAMINE DEACETYLASE 1, MITOCHONDRIAL-RELATED"/>
    <property type="match status" value="1"/>
</dbReference>
<dbReference type="PANTHER" id="PTHR33694:SF1">
    <property type="entry name" value="UDP-3-O-ACYL-N-ACETYLGLUCOSAMINE DEACETYLASE 1, MITOCHONDRIAL-RELATED"/>
    <property type="match status" value="1"/>
</dbReference>
<dbReference type="Pfam" id="PF03331">
    <property type="entry name" value="LpxC"/>
    <property type="match status" value="1"/>
</dbReference>
<dbReference type="SUPFAM" id="SSF54211">
    <property type="entry name" value="Ribosomal protein S5 domain 2-like"/>
    <property type="match status" value="2"/>
</dbReference>
<protein>
    <recommendedName>
        <fullName evidence="1">UDP-3-O-acyl-N-acetylglucosamine deacetylase</fullName>
        <shortName evidence="1">UDP-3-O-acyl-GlcNAc deacetylase</shortName>
        <ecNumber evidence="1">3.5.1.108</ecNumber>
    </recommendedName>
    <alternativeName>
        <fullName evidence="1">UDP-3-O-[R-3-hydroxymyristoyl]-N-acetylglucosamine deacetylase</fullName>
    </alternativeName>
</protein>
<evidence type="ECO:0000255" key="1">
    <source>
        <dbReference type="HAMAP-Rule" id="MF_00388"/>
    </source>
</evidence>
<comment type="function">
    <text evidence="1">Catalyzes the hydrolysis of UDP-3-O-myristoyl-N-acetylglucosamine to form UDP-3-O-myristoylglucosamine and acetate, the committed step in lipid A biosynthesis.</text>
</comment>
<comment type="catalytic activity">
    <reaction evidence="1">
        <text>a UDP-3-O-[(3R)-3-hydroxyacyl]-N-acetyl-alpha-D-glucosamine + H2O = a UDP-3-O-[(3R)-3-hydroxyacyl]-alpha-D-glucosamine + acetate</text>
        <dbReference type="Rhea" id="RHEA:67816"/>
        <dbReference type="ChEBI" id="CHEBI:15377"/>
        <dbReference type="ChEBI" id="CHEBI:30089"/>
        <dbReference type="ChEBI" id="CHEBI:137740"/>
        <dbReference type="ChEBI" id="CHEBI:173225"/>
        <dbReference type="EC" id="3.5.1.108"/>
    </reaction>
</comment>
<comment type="cofactor">
    <cofactor evidence="1">
        <name>Zn(2+)</name>
        <dbReference type="ChEBI" id="CHEBI:29105"/>
    </cofactor>
</comment>
<comment type="pathway">
    <text evidence="1">Glycolipid biosynthesis; lipid IV(A) biosynthesis; lipid IV(A) from (3R)-3-hydroxytetradecanoyl-[acyl-carrier-protein] and UDP-N-acetyl-alpha-D-glucosamine: step 2/6.</text>
</comment>
<comment type="similarity">
    <text evidence="1">Belongs to the LpxC family.</text>
</comment>
<name>LPXC_SHESA</name>
<keyword id="KW-0378">Hydrolase</keyword>
<keyword id="KW-0441">Lipid A biosynthesis</keyword>
<keyword id="KW-0444">Lipid biosynthesis</keyword>
<keyword id="KW-0443">Lipid metabolism</keyword>
<keyword id="KW-0479">Metal-binding</keyword>
<keyword id="KW-0862">Zinc</keyword>
<gene>
    <name evidence="1" type="primary">lpxC</name>
    <name type="ordered locus">Shewana3_3738</name>
</gene>
<proteinExistence type="inferred from homology"/>
<organism>
    <name type="scientific">Shewanella sp. (strain ANA-3)</name>
    <dbReference type="NCBI Taxonomy" id="94122"/>
    <lineage>
        <taxon>Bacteria</taxon>
        <taxon>Pseudomonadati</taxon>
        <taxon>Pseudomonadota</taxon>
        <taxon>Gammaproteobacteria</taxon>
        <taxon>Alteromonadales</taxon>
        <taxon>Shewanellaceae</taxon>
        <taxon>Shewanella</taxon>
    </lineage>
</organism>
<accession>A0L1N7</accession>